<proteinExistence type="evidence at protein level"/>
<protein>
    <recommendedName>
        <fullName>Pyruvate synthase subunit PorD</fullName>
    </recommendedName>
    <alternativeName>
        <fullName>Pyruvate oxidoreductase delta chain</fullName>
        <shortName>POR</shortName>
    </alternativeName>
    <alternativeName>
        <fullName>Pyruvic-ferredoxin oxidoreductase subunit delta</fullName>
    </alternativeName>
</protein>
<evidence type="ECO:0000250" key="1">
    <source>
        <dbReference type="UniProtKB" id="P94692"/>
    </source>
</evidence>
<evidence type="ECO:0000255" key="2">
    <source>
        <dbReference type="PROSITE-ProRule" id="PRU00711"/>
    </source>
</evidence>
<evidence type="ECO:0000269" key="3">
    <source>
    </source>
</evidence>
<evidence type="ECO:0000305" key="4"/>
<gene>
    <name type="primary">porD</name>
    <name type="ordered locus">TM_0016</name>
</gene>
<feature type="initiator methionine" description="Removed" evidence="3">
    <location>
        <position position="1"/>
    </location>
</feature>
<feature type="chain" id="PRO_0000099924" description="Pyruvate synthase subunit PorD">
    <location>
        <begin position="2"/>
        <end position="99"/>
    </location>
</feature>
<feature type="domain" description="4Fe-4S ferredoxin-type 1" evidence="2">
    <location>
        <begin position="32"/>
        <end position="60"/>
    </location>
</feature>
<feature type="domain" description="4Fe-4S ferredoxin-type 2" evidence="2">
    <location>
        <begin position="61"/>
        <end position="91"/>
    </location>
</feature>
<feature type="binding site" evidence="1">
    <location>
        <position position="41"/>
    </location>
    <ligand>
        <name>[4Fe-4S] cluster</name>
        <dbReference type="ChEBI" id="CHEBI:49883"/>
        <label>1</label>
    </ligand>
</feature>
<feature type="binding site" evidence="1">
    <location>
        <position position="44"/>
    </location>
    <ligand>
        <name>[4Fe-4S] cluster</name>
        <dbReference type="ChEBI" id="CHEBI:49883"/>
        <label>1</label>
    </ligand>
</feature>
<feature type="binding site" evidence="1">
    <location>
        <position position="47"/>
    </location>
    <ligand>
        <name>[4Fe-4S] cluster</name>
        <dbReference type="ChEBI" id="CHEBI:49883"/>
        <label>1</label>
    </ligand>
</feature>
<feature type="binding site" evidence="1">
    <location>
        <position position="51"/>
    </location>
    <ligand>
        <name>[4Fe-4S] cluster</name>
        <dbReference type="ChEBI" id="CHEBI:49883"/>
        <label>2</label>
    </ligand>
</feature>
<feature type="binding site" evidence="1">
    <location>
        <position position="71"/>
    </location>
    <ligand>
        <name>[4Fe-4S] cluster</name>
        <dbReference type="ChEBI" id="CHEBI:49883"/>
        <label>2</label>
    </ligand>
</feature>
<feature type="binding site" evidence="1">
    <location>
        <position position="74"/>
    </location>
    <ligand>
        <name>[4Fe-4S] cluster</name>
        <dbReference type="ChEBI" id="CHEBI:49883"/>
        <label>2</label>
    </ligand>
</feature>
<feature type="binding site" evidence="1">
    <location>
        <position position="77"/>
    </location>
    <ligand>
        <name>[4Fe-4S] cluster</name>
        <dbReference type="ChEBI" id="CHEBI:49883"/>
        <label>2</label>
    </ligand>
</feature>
<feature type="binding site" evidence="1">
    <location>
        <position position="81"/>
    </location>
    <ligand>
        <name>[4Fe-4S] cluster</name>
        <dbReference type="ChEBI" id="CHEBI:49883"/>
        <label>1</label>
    </ligand>
</feature>
<keyword id="KW-0004">4Fe-4S</keyword>
<keyword id="KW-0903">Direct protein sequencing</keyword>
<keyword id="KW-0249">Electron transport</keyword>
<keyword id="KW-0408">Iron</keyword>
<keyword id="KW-0411">Iron-sulfur</keyword>
<keyword id="KW-0479">Metal-binding</keyword>
<keyword id="KW-1185">Reference proteome</keyword>
<keyword id="KW-0677">Repeat</keyword>
<keyword id="KW-0813">Transport</keyword>
<comment type="cofactor">
    <cofactor evidence="1">
        <name>[4Fe-4S] cluster</name>
        <dbReference type="ChEBI" id="CHEBI:49883"/>
    </cofactor>
    <text evidence="1">Binds 2 [4Fe-4S] clusters.</text>
</comment>
<comment type="subunit">
    <text>Heterotetramer of one alpha, one beta, one delta and one gamma chain.</text>
</comment>
<comment type="sequence caution" evidence="4">
    <conflict type="erroneous initiation">
        <sequence resource="EMBL-CDS" id="AAD35110"/>
    </conflict>
</comment>
<dbReference type="EMBL" id="X85171">
    <property type="protein sequence ID" value="CAA59456.1"/>
    <property type="molecule type" value="Genomic_DNA"/>
</dbReference>
<dbReference type="EMBL" id="AE000512">
    <property type="protein sequence ID" value="AAD35110.1"/>
    <property type="status" value="ALT_INIT"/>
    <property type="molecule type" value="Genomic_DNA"/>
</dbReference>
<dbReference type="PIR" id="A59427">
    <property type="entry name" value="B72427"/>
</dbReference>
<dbReference type="RefSeq" id="NP_227832.1">
    <property type="nucleotide sequence ID" value="NC_000853.1"/>
</dbReference>
<dbReference type="RefSeq" id="WP_004082458.1">
    <property type="nucleotide sequence ID" value="NZ_CP011107.1"/>
</dbReference>
<dbReference type="SMR" id="Q56316"/>
<dbReference type="STRING" id="243274.TM_0016"/>
<dbReference type="PaxDb" id="243274-THEMA_04720"/>
<dbReference type="EnsemblBacteria" id="AAD35110">
    <property type="protein sequence ID" value="AAD35110"/>
    <property type="gene ID" value="TM_0016"/>
</dbReference>
<dbReference type="KEGG" id="tma:TM0016"/>
<dbReference type="KEGG" id="tmi:THEMA_04720"/>
<dbReference type="KEGG" id="tmm:Tmari_0013"/>
<dbReference type="KEGG" id="tmw:THMA_0012"/>
<dbReference type="PATRIC" id="fig|243274.5.peg.14"/>
<dbReference type="eggNOG" id="COG1144">
    <property type="taxonomic scope" value="Bacteria"/>
</dbReference>
<dbReference type="InParanoid" id="Q56316"/>
<dbReference type="OrthoDB" id="9794954at2"/>
<dbReference type="BioCyc" id="MetaCyc:MONOMER-426"/>
<dbReference type="BRENDA" id="1.2.7.1">
    <property type="organism ID" value="6331"/>
</dbReference>
<dbReference type="Proteomes" id="UP000008183">
    <property type="component" value="Chromosome"/>
</dbReference>
<dbReference type="GO" id="GO:0051539">
    <property type="term" value="F:4 iron, 4 sulfur cluster binding"/>
    <property type="evidence" value="ECO:0007669"/>
    <property type="project" value="UniProtKB-KW"/>
</dbReference>
<dbReference type="GO" id="GO:0046872">
    <property type="term" value="F:metal ion binding"/>
    <property type="evidence" value="ECO:0007669"/>
    <property type="project" value="UniProtKB-KW"/>
</dbReference>
<dbReference type="GO" id="GO:0016625">
    <property type="term" value="F:oxidoreductase activity, acting on the aldehyde or oxo group of donors, iron-sulfur protein as acceptor"/>
    <property type="evidence" value="ECO:0007669"/>
    <property type="project" value="InterPro"/>
</dbReference>
<dbReference type="Gene3D" id="3.30.70.20">
    <property type="match status" value="1"/>
</dbReference>
<dbReference type="InterPro" id="IPR017896">
    <property type="entry name" value="4Fe4S_Fe-S-bd"/>
</dbReference>
<dbReference type="InterPro" id="IPR017900">
    <property type="entry name" value="4Fe4S_Fe_S_CS"/>
</dbReference>
<dbReference type="InterPro" id="IPR011898">
    <property type="entry name" value="PorD_KorD"/>
</dbReference>
<dbReference type="InterPro" id="IPR053389">
    <property type="entry name" value="Pyruvate_synthase_PorD"/>
</dbReference>
<dbReference type="NCBIfam" id="NF040684">
    <property type="entry name" value="PorD_Arch"/>
    <property type="match status" value="1"/>
</dbReference>
<dbReference type="NCBIfam" id="TIGR02179">
    <property type="entry name" value="PorD_KorD"/>
    <property type="match status" value="1"/>
</dbReference>
<dbReference type="PANTHER" id="PTHR43724">
    <property type="entry name" value="PYRUVATE SYNTHASE SUBUNIT PORD"/>
    <property type="match status" value="1"/>
</dbReference>
<dbReference type="PANTHER" id="PTHR43724:SF1">
    <property type="entry name" value="PYRUVATE SYNTHASE SUBUNIT PORD"/>
    <property type="match status" value="1"/>
</dbReference>
<dbReference type="Pfam" id="PF14697">
    <property type="entry name" value="Fer4_21"/>
    <property type="match status" value="1"/>
</dbReference>
<dbReference type="SUPFAM" id="SSF54862">
    <property type="entry name" value="4Fe-4S ferredoxins"/>
    <property type="match status" value="1"/>
</dbReference>
<dbReference type="PROSITE" id="PS00198">
    <property type="entry name" value="4FE4S_FER_1"/>
    <property type="match status" value="2"/>
</dbReference>
<dbReference type="PROSITE" id="PS51379">
    <property type="entry name" value="4FE4S_FER_2"/>
    <property type="match status" value="2"/>
</dbReference>
<sequence>MSLKSWKEIPIGGVIDKPGTAREYKTGAWRVMRPILHKEKCIDCMFCWLYCPDQAIIQEGGIMKGFNYDYCKGCGLCANVCPKQAIEMRPETEFLSEEG</sequence>
<accession>Q56316</accession>
<reference key="1">
    <citation type="journal article" date="1996" name="J. Bacteriol.">
        <title>Molecular and phylogenetic characterization of pyruvate and 2-ketoisovalerate ferredoxin oxidoreductases from Pyrococcus furiosus and pyruvate ferredoxin oxidoreductase from Thermotoga maritima.</title>
        <authorList>
            <person name="Kletzin A."/>
            <person name="Adams M.W.W."/>
        </authorList>
    </citation>
    <scope>NUCLEOTIDE SEQUENCE [GENOMIC DNA]</scope>
    <scope>PROTEIN SEQUENCE OF 2-21</scope>
    <source>
        <strain>ATCC 43589 / DSM 3109 / JCM 10099 / NBRC 100826 / MSB8</strain>
    </source>
</reference>
<reference key="2">
    <citation type="journal article" date="1999" name="Nature">
        <title>Evidence for lateral gene transfer between Archaea and Bacteria from genome sequence of Thermotoga maritima.</title>
        <authorList>
            <person name="Nelson K.E."/>
            <person name="Clayton R.A."/>
            <person name="Gill S.R."/>
            <person name="Gwinn M.L."/>
            <person name="Dodson R.J."/>
            <person name="Haft D.H."/>
            <person name="Hickey E.K."/>
            <person name="Peterson J.D."/>
            <person name="Nelson W.C."/>
            <person name="Ketchum K.A."/>
            <person name="McDonald L.A."/>
            <person name="Utterback T.R."/>
            <person name="Malek J.A."/>
            <person name="Linher K.D."/>
            <person name="Garrett M.M."/>
            <person name="Stewart A.M."/>
            <person name="Cotton M.D."/>
            <person name="Pratt M.S."/>
            <person name="Phillips C.A."/>
            <person name="Richardson D.L."/>
            <person name="Heidelberg J.F."/>
            <person name="Sutton G.G."/>
            <person name="Fleischmann R.D."/>
            <person name="Eisen J.A."/>
            <person name="White O."/>
            <person name="Salzberg S.L."/>
            <person name="Smith H.O."/>
            <person name="Venter J.C."/>
            <person name="Fraser C.M."/>
        </authorList>
    </citation>
    <scope>NUCLEOTIDE SEQUENCE [LARGE SCALE GENOMIC DNA]</scope>
    <source>
        <strain>ATCC 43589 / DSM 3109 / JCM 10099 / NBRC 100826 / MSB8</strain>
    </source>
</reference>
<name>PORD_THEMA</name>
<organism>
    <name type="scientific">Thermotoga maritima (strain ATCC 43589 / DSM 3109 / JCM 10099 / NBRC 100826 / MSB8)</name>
    <dbReference type="NCBI Taxonomy" id="243274"/>
    <lineage>
        <taxon>Bacteria</taxon>
        <taxon>Thermotogati</taxon>
        <taxon>Thermotogota</taxon>
        <taxon>Thermotogae</taxon>
        <taxon>Thermotogales</taxon>
        <taxon>Thermotogaceae</taxon>
        <taxon>Thermotoga</taxon>
    </lineage>
</organism>